<comment type="function">
    <text evidence="3 4">Transcriptional coactivator; part of the gene cluster that mediates the biosynthesis of monodictyphenone, a prenyl xanthone derivative (PubMed:20139316, PubMed:21351751). With mdpE, coregulates the production of monodictyphenone (PubMed:20139316, PubMed:21351751).</text>
</comment>
<comment type="subcellular location">
    <subcellularLocation>
        <location evidence="6">Nucleus</location>
    </subcellularLocation>
</comment>
<comment type="disruption phenotype">
    <text evidence="3 4">Impairs the production of monodictyphenone and of any of the intermediates of the pathway (PubMed:20139316, PubMed:21351751).</text>
</comment>
<comment type="sequence caution" evidence="6">
    <conflict type="erroneous gene model prediction">
        <sequence resource="EMBL-CDS" id="EAA66018"/>
    </conflict>
    <text>The predicted gene AN0145 has been split into 2 genes: ANIA_10021 and ANIA_10049.</text>
</comment>
<dbReference type="EMBL" id="BN001308">
    <property type="protein sequence ID" value="CBF90109.1"/>
    <property type="molecule type" value="Genomic_DNA"/>
</dbReference>
<dbReference type="EMBL" id="AACD01000005">
    <property type="protein sequence ID" value="EAA66018.1"/>
    <property type="status" value="ALT_SEQ"/>
    <property type="molecule type" value="Genomic_DNA"/>
</dbReference>
<dbReference type="RefSeq" id="XP_657749.1">
    <property type="nucleotide sequence ID" value="XM_652657.1"/>
</dbReference>
<dbReference type="SMR" id="C8VQ72"/>
<dbReference type="STRING" id="227321.C8VQ72"/>
<dbReference type="EnsemblFungi" id="CBF90109">
    <property type="protein sequence ID" value="CBF90109"/>
    <property type="gene ID" value="ANIA_10021"/>
</dbReference>
<dbReference type="GeneID" id="2875924"/>
<dbReference type="KEGG" id="ani:ANIA_10021"/>
<dbReference type="eggNOG" id="KOG3178">
    <property type="taxonomic scope" value="Eukaryota"/>
</dbReference>
<dbReference type="HOGENOM" id="CLU_005533_11_0_1"/>
<dbReference type="InParanoid" id="C8VQ72"/>
<dbReference type="OMA" id="LLACIQW"/>
<dbReference type="OrthoDB" id="1606438at2759"/>
<dbReference type="Proteomes" id="UP000000560">
    <property type="component" value="Chromosome VIII"/>
</dbReference>
<dbReference type="GO" id="GO:0005634">
    <property type="term" value="C:nucleus"/>
    <property type="evidence" value="ECO:0007669"/>
    <property type="project" value="UniProtKB-SubCell"/>
</dbReference>
<dbReference type="GO" id="GO:0003677">
    <property type="term" value="F:DNA binding"/>
    <property type="evidence" value="ECO:0007669"/>
    <property type="project" value="UniProtKB-KW"/>
</dbReference>
<dbReference type="Gene3D" id="3.40.50.150">
    <property type="entry name" value="Vaccinia Virus protein VP39"/>
    <property type="match status" value="1"/>
</dbReference>
<dbReference type="Gene3D" id="1.10.10.10">
    <property type="entry name" value="Winged helix-like DNA-binding domain superfamily/Winged helix DNA-binding domain"/>
    <property type="match status" value="1"/>
</dbReference>
<dbReference type="InterPro" id="IPR029063">
    <property type="entry name" value="SAM-dependent_MTases_sf"/>
</dbReference>
<dbReference type="InterPro" id="IPR036388">
    <property type="entry name" value="WH-like_DNA-bd_sf"/>
</dbReference>
<dbReference type="InterPro" id="IPR036390">
    <property type="entry name" value="WH_DNA-bd_sf"/>
</dbReference>
<dbReference type="PANTHER" id="PTHR43712:SF15">
    <property type="entry name" value="MONODICTYPHENONE CLUSTER TRANSCRIPTIONAL COACTIVATOR MDPA"/>
    <property type="match status" value="1"/>
</dbReference>
<dbReference type="PANTHER" id="PTHR43712">
    <property type="entry name" value="PUTATIVE (AFU_ORTHOLOGUE AFUA_4G14580)-RELATED"/>
    <property type="match status" value="1"/>
</dbReference>
<dbReference type="SUPFAM" id="SSF46785">
    <property type="entry name" value="Winged helix' DNA-binding domain"/>
    <property type="match status" value="1"/>
</dbReference>
<evidence type="ECO:0000255" key="1">
    <source>
        <dbReference type="PROSITE-ProRule" id="PRU00393"/>
    </source>
</evidence>
<evidence type="ECO:0000256" key="2">
    <source>
        <dbReference type="SAM" id="MobiDB-lite"/>
    </source>
</evidence>
<evidence type="ECO:0000269" key="3">
    <source>
    </source>
</evidence>
<evidence type="ECO:0000269" key="4">
    <source>
    </source>
</evidence>
<evidence type="ECO:0000303" key="5">
    <source>
    </source>
</evidence>
<evidence type="ECO:0000305" key="6"/>
<keyword id="KW-0238">DNA-binding</keyword>
<keyword id="KW-0539">Nucleus</keyword>
<keyword id="KW-1185">Reference proteome</keyword>
<keyword id="KW-0804">Transcription</keyword>
<keyword id="KW-0805">Transcription regulation</keyword>
<protein>
    <recommendedName>
        <fullName evidence="5">Monodictyphenone cluster transcriptional coactivator mdpA</fullName>
    </recommendedName>
    <alternativeName>
        <fullName evidence="5">Monodictyphenone synthesis protein A</fullName>
    </alternativeName>
</protein>
<accession>C8VQ72</accession>
<accession>Q5BH35</accession>
<reference key="1">
    <citation type="journal article" date="2005" name="Nature">
        <title>Sequencing of Aspergillus nidulans and comparative analysis with A. fumigatus and A. oryzae.</title>
        <authorList>
            <person name="Galagan J.E."/>
            <person name="Calvo S.E."/>
            <person name="Cuomo C."/>
            <person name="Ma L.-J."/>
            <person name="Wortman J.R."/>
            <person name="Batzoglou S."/>
            <person name="Lee S.-I."/>
            <person name="Bastuerkmen M."/>
            <person name="Spevak C.C."/>
            <person name="Clutterbuck J."/>
            <person name="Kapitonov V."/>
            <person name="Jurka J."/>
            <person name="Scazzocchio C."/>
            <person name="Farman M.L."/>
            <person name="Butler J."/>
            <person name="Purcell S."/>
            <person name="Harris S."/>
            <person name="Braus G.H."/>
            <person name="Draht O."/>
            <person name="Busch S."/>
            <person name="D'Enfert C."/>
            <person name="Bouchier C."/>
            <person name="Goldman G.H."/>
            <person name="Bell-Pedersen D."/>
            <person name="Griffiths-Jones S."/>
            <person name="Doonan J.H."/>
            <person name="Yu J."/>
            <person name="Vienken K."/>
            <person name="Pain A."/>
            <person name="Freitag M."/>
            <person name="Selker E.U."/>
            <person name="Archer D.B."/>
            <person name="Penalva M.A."/>
            <person name="Oakley B.R."/>
            <person name="Momany M."/>
            <person name="Tanaka T."/>
            <person name="Kumagai T."/>
            <person name="Asai K."/>
            <person name="Machida M."/>
            <person name="Nierman W.C."/>
            <person name="Denning D.W."/>
            <person name="Caddick M.X."/>
            <person name="Hynes M."/>
            <person name="Paoletti M."/>
            <person name="Fischer R."/>
            <person name="Miller B.L."/>
            <person name="Dyer P.S."/>
            <person name="Sachs M.S."/>
            <person name="Osmani S.A."/>
            <person name="Birren B.W."/>
        </authorList>
    </citation>
    <scope>NUCLEOTIDE SEQUENCE [LARGE SCALE GENOMIC DNA]</scope>
    <source>
        <strain>FGSC A4 / ATCC 38163 / CBS 112.46 / NRRL 194 / M139</strain>
    </source>
</reference>
<reference key="2">
    <citation type="journal article" date="2009" name="Fungal Genet. Biol.">
        <title>The 2008 update of the Aspergillus nidulans genome annotation: a community effort.</title>
        <authorList>
            <person name="Wortman J.R."/>
            <person name="Gilsenan J.M."/>
            <person name="Joardar V."/>
            <person name="Deegan J."/>
            <person name="Clutterbuck J."/>
            <person name="Andersen M.R."/>
            <person name="Archer D."/>
            <person name="Bencina M."/>
            <person name="Braus G."/>
            <person name="Coutinho P."/>
            <person name="von Dohren H."/>
            <person name="Doonan J."/>
            <person name="Driessen A.J."/>
            <person name="Durek P."/>
            <person name="Espeso E."/>
            <person name="Fekete E."/>
            <person name="Flipphi M."/>
            <person name="Estrada C.G."/>
            <person name="Geysens S."/>
            <person name="Goldman G."/>
            <person name="de Groot P.W."/>
            <person name="Hansen K."/>
            <person name="Harris S.D."/>
            <person name="Heinekamp T."/>
            <person name="Helmstaedt K."/>
            <person name="Henrissat B."/>
            <person name="Hofmann G."/>
            <person name="Homan T."/>
            <person name="Horio T."/>
            <person name="Horiuchi H."/>
            <person name="James S."/>
            <person name="Jones M."/>
            <person name="Karaffa L."/>
            <person name="Karanyi Z."/>
            <person name="Kato M."/>
            <person name="Keller N."/>
            <person name="Kelly D.E."/>
            <person name="Kiel J.A."/>
            <person name="Kim J.M."/>
            <person name="van der Klei I.J."/>
            <person name="Klis F.M."/>
            <person name="Kovalchuk A."/>
            <person name="Krasevec N."/>
            <person name="Kubicek C.P."/>
            <person name="Liu B."/>
            <person name="Maccabe A."/>
            <person name="Meyer V."/>
            <person name="Mirabito P."/>
            <person name="Miskei M."/>
            <person name="Mos M."/>
            <person name="Mullins J."/>
            <person name="Nelson D.R."/>
            <person name="Nielsen J."/>
            <person name="Oakley B.R."/>
            <person name="Osmani S.A."/>
            <person name="Pakula T."/>
            <person name="Paszewski A."/>
            <person name="Paulsen I."/>
            <person name="Pilsyk S."/>
            <person name="Pocsi I."/>
            <person name="Punt P.J."/>
            <person name="Ram A.F."/>
            <person name="Ren Q."/>
            <person name="Robellet X."/>
            <person name="Robson G."/>
            <person name="Seiboth B."/>
            <person name="van Solingen P."/>
            <person name="Specht T."/>
            <person name="Sun J."/>
            <person name="Taheri-Talesh N."/>
            <person name="Takeshita N."/>
            <person name="Ussery D."/>
            <person name="vanKuyk P.A."/>
            <person name="Visser H."/>
            <person name="van de Vondervoort P.J."/>
            <person name="de Vries R.P."/>
            <person name="Walton J."/>
            <person name="Xiang X."/>
            <person name="Xiong Y."/>
            <person name="Zeng A.P."/>
            <person name="Brandt B.W."/>
            <person name="Cornell M.J."/>
            <person name="van den Hondel C.A."/>
            <person name="Visser J."/>
            <person name="Oliver S.G."/>
            <person name="Turner G."/>
        </authorList>
    </citation>
    <scope>GENOME REANNOTATION</scope>
    <source>
        <strain>FGSC A4 / ATCC 38163 / CBS 112.46 / NRRL 194 / M139</strain>
    </source>
</reference>
<reference key="3">
    <citation type="journal article" date="2010" name="Appl. Environ. Microbiol.">
        <title>Characterization of the Aspergillus nidulans monodictyphenone gene cluster.</title>
        <authorList>
            <person name="Chiang Y.M."/>
            <person name="Szewczyk E."/>
            <person name="Davidson A.D."/>
            <person name="Entwistle R."/>
            <person name="Keller N.P."/>
            <person name="Wang C.C."/>
            <person name="Oakley B.R."/>
        </authorList>
    </citation>
    <scope>FUNCTION</scope>
    <scope>DISRUPTION PHENOTYPE</scope>
</reference>
<reference key="4">
    <citation type="journal article" date="2011" name="J. Am. Chem. Soc.">
        <title>Genome-based deletion analysis reveals the prenyl xanthone biosynthesis pathway in Aspergillus nidulans.</title>
        <authorList>
            <person name="Sanchez J.F."/>
            <person name="Entwistle R."/>
            <person name="Hung J.H."/>
            <person name="Yaegashi J."/>
            <person name="Jain S."/>
            <person name="Chiang Y.M."/>
            <person name="Wang C.C."/>
            <person name="Oakley B.R."/>
        </authorList>
    </citation>
    <scope>FUNCTION</scope>
    <scope>DISRUPTION PHENOTYPE</scope>
</reference>
<name>MDPA_EMENI</name>
<sequence>MMSSLSDLETHASELTSAVKTIISQCPRQNAASRSRTQPLITSSASKEAHRAQQSILSTISGLQKLLTSPTDFLHHLAVQNQLLACLQWLGEFQVLACIPLTGTVPIKDVAELAGVPETHLSRIIRMTATAGFLDEPDPGQVAHSALSAPFVTKPSYLDAVMFLAGTIAPSALQMPTATQRFGASLRPNETAYNLALNNPATFASTSEQRPKLQRQWPAFLQYGTSDTDDRVTDLLSRLDHFRRGSISVVEVSARSLDRATTLANLYPSINITVQIASPAGPTAWSPAHPNPIRPPTPGGSHKHDDLRALTASTASTTPASSHNHTHTHTTNSIPQASNITIQHRLPTAPQPITSANLYILHLPSPSPTVPFASLATHILAELRSHLDILRSNPSATLILTPRPLPEPSAVHSEVEASARLRDLTLMQLANEREIELAEWINLLSNVSDSMGRLVVVNKIQSRESTVVLLEIRYQAYNR</sequence>
<organism>
    <name type="scientific">Emericella nidulans (strain FGSC A4 / ATCC 38163 / CBS 112.46 / NRRL 194 / M139)</name>
    <name type="common">Aspergillus nidulans</name>
    <dbReference type="NCBI Taxonomy" id="227321"/>
    <lineage>
        <taxon>Eukaryota</taxon>
        <taxon>Fungi</taxon>
        <taxon>Dikarya</taxon>
        <taxon>Ascomycota</taxon>
        <taxon>Pezizomycotina</taxon>
        <taxon>Eurotiomycetes</taxon>
        <taxon>Eurotiomycetidae</taxon>
        <taxon>Eurotiales</taxon>
        <taxon>Aspergillaceae</taxon>
        <taxon>Aspergillus</taxon>
        <taxon>Aspergillus subgen. Nidulantes</taxon>
    </lineage>
</organism>
<gene>
    <name evidence="5" type="primary">mdpA</name>
    <name type="ORF">ANIA_10021</name>
</gene>
<feature type="chain" id="PRO_0000437060" description="Monodictyphenone cluster transcriptional coactivator mdpA">
    <location>
        <begin position="1"/>
        <end position="479"/>
    </location>
</feature>
<feature type="domain" description="HTH iclR-type" evidence="1">
    <location>
        <begin position="77"/>
        <end position="147"/>
    </location>
</feature>
<feature type="DNA-binding region" description="H-T-H motif" evidence="1">
    <location>
        <begin position="107"/>
        <end position="126"/>
    </location>
</feature>
<feature type="region of interest" description="Disordered" evidence="2">
    <location>
        <begin position="281"/>
        <end position="305"/>
    </location>
</feature>
<feature type="region of interest" description="Disordered" evidence="2">
    <location>
        <begin position="314"/>
        <end position="333"/>
    </location>
</feature>
<feature type="compositionally biased region" description="Pro residues" evidence="2">
    <location>
        <begin position="289"/>
        <end position="298"/>
    </location>
</feature>
<feature type="compositionally biased region" description="Low complexity" evidence="2">
    <location>
        <begin position="314"/>
        <end position="323"/>
    </location>
</feature>
<proteinExistence type="predicted"/>